<organism>
    <name type="scientific">Corynebacterium glutamicum (strain R)</name>
    <dbReference type="NCBI Taxonomy" id="340322"/>
    <lineage>
        <taxon>Bacteria</taxon>
        <taxon>Bacillati</taxon>
        <taxon>Actinomycetota</taxon>
        <taxon>Actinomycetes</taxon>
        <taxon>Mycobacteriales</taxon>
        <taxon>Corynebacteriaceae</taxon>
        <taxon>Corynebacterium</taxon>
    </lineage>
</organism>
<evidence type="ECO:0000255" key="1">
    <source>
        <dbReference type="HAMAP-Rule" id="MF_00074"/>
    </source>
</evidence>
<sequence length="223" mass="24117">MLYRSISCPKGTFFMTTPPAAAEIFGDNLEKAIAYHESLATDGSVRGFIGPREVPRLWDRHILNCGVIGEAMDEGISVADIGSGAGLPGIPLAIARPDLNITLIEPLLKRSVYLNEVKEALNLDNVTVIRGRAEEKVVRKQVGLVDIVTSRAVAPLGKLATWSLPLVKIGGRMVAMKGSSVEEEIERDAKEIRKAGGTDIKVYTVGEALLSEPTTLISIRREK</sequence>
<keyword id="KW-0963">Cytoplasm</keyword>
<keyword id="KW-0489">Methyltransferase</keyword>
<keyword id="KW-0698">rRNA processing</keyword>
<keyword id="KW-0949">S-adenosyl-L-methionine</keyword>
<keyword id="KW-0808">Transferase</keyword>
<reference key="1">
    <citation type="journal article" date="2007" name="Microbiology">
        <title>Comparative analysis of the Corynebacterium glutamicum group and complete genome sequence of strain R.</title>
        <authorList>
            <person name="Yukawa H."/>
            <person name="Omumasaba C.A."/>
            <person name="Nonaka H."/>
            <person name="Kos P."/>
            <person name="Okai N."/>
            <person name="Suzuki N."/>
            <person name="Suda M."/>
            <person name="Tsuge Y."/>
            <person name="Watanabe J."/>
            <person name="Ikeda Y."/>
            <person name="Vertes A.A."/>
            <person name="Inui M."/>
        </authorList>
    </citation>
    <scope>NUCLEOTIDE SEQUENCE [LARGE SCALE GENOMIC DNA]</scope>
    <source>
        <strain>R</strain>
    </source>
</reference>
<name>RSMG_CORGB</name>
<comment type="function">
    <text evidence="1">Specifically methylates the N7 position of guanine in position 518 of 16S rRNA.</text>
</comment>
<comment type="subcellular location">
    <subcellularLocation>
        <location evidence="1">Cytoplasm</location>
    </subcellularLocation>
</comment>
<comment type="similarity">
    <text evidence="1">Belongs to the methyltransferase superfamily. RNA methyltransferase RsmG family.</text>
</comment>
<proteinExistence type="inferred from homology"/>
<protein>
    <recommendedName>
        <fullName evidence="1">Ribosomal RNA small subunit methyltransferase G</fullName>
        <ecNumber evidence="1">2.1.1.-</ecNumber>
    </recommendedName>
    <alternativeName>
        <fullName evidence="1">16S rRNA 7-methylguanosine methyltransferase</fullName>
        <shortName evidence="1">16S rRNA m7G methyltransferase</shortName>
    </alternativeName>
</protein>
<feature type="chain" id="PRO_0000335339" description="Ribosomal RNA small subunit methyltransferase G">
    <location>
        <begin position="1"/>
        <end position="223"/>
    </location>
</feature>
<feature type="binding site" evidence="1">
    <location>
        <position position="82"/>
    </location>
    <ligand>
        <name>S-adenosyl-L-methionine</name>
        <dbReference type="ChEBI" id="CHEBI:59789"/>
    </ligand>
</feature>
<feature type="binding site" evidence="1">
    <location>
        <position position="87"/>
    </location>
    <ligand>
        <name>S-adenosyl-L-methionine</name>
        <dbReference type="ChEBI" id="CHEBI:59789"/>
    </ligand>
</feature>
<feature type="binding site" evidence="1">
    <location>
        <begin position="133"/>
        <end position="134"/>
    </location>
    <ligand>
        <name>S-adenosyl-L-methionine</name>
        <dbReference type="ChEBI" id="CHEBI:59789"/>
    </ligand>
</feature>
<feature type="binding site" evidence="1">
    <location>
        <position position="151"/>
    </location>
    <ligand>
        <name>S-adenosyl-L-methionine</name>
        <dbReference type="ChEBI" id="CHEBI:59789"/>
    </ligand>
</feature>
<gene>
    <name evidence="1" type="primary">rsmG</name>
    <name type="ordered locus">cgR_2986</name>
</gene>
<dbReference type="EC" id="2.1.1.-" evidence="1"/>
<dbReference type="EMBL" id="AP009044">
    <property type="protein sequence ID" value="BAF56009.1"/>
    <property type="molecule type" value="Genomic_DNA"/>
</dbReference>
<dbReference type="SMR" id="A4QIE3"/>
<dbReference type="KEGG" id="cgt:cgR_2986"/>
<dbReference type="HOGENOM" id="CLU_065341_5_0_11"/>
<dbReference type="PhylomeDB" id="A4QIE3"/>
<dbReference type="Proteomes" id="UP000006698">
    <property type="component" value="Chromosome"/>
</dbReference>
<dbReference type="GO" id="GO:0005829">
    <property type="term" value="C:cytosol"/>
    <property type="evidence" value="ECO:0007669"/>
    <property type="project" value="TreeGrafter"/>
</dbReference>
<dbReference type="GO" id="GO:0070043">
    <property type="term" value="F:rRNA (guanine-N7-)-methyltransferase activity"/>
    <property type="evidence" value="ECO:0007669"/>
    <property type="project" value="UniProtKB-UniRule"/>
</dbReference>
<dbReference type="Gene3D" id="3.40.50.150">
    <property type="entry name" value="Vaccinia Virus protein VP39"/>
    <property type="match status" value="1"/>
</dbReference>
<dbReference type="HAMAP" id="MF_00074">
    <property type="entry name" value="16SrRNA_methyltr_G"/>
    <property type="match status" value="1"/>
</dbReference>
<dbReference type="InterPro" id="IPR003682">
    <property type="entry name" value="rRNA_ssu_MeTfrase_G"/>
</dbReference>
<dbReference type="InterPro" id="IPR029063">
    <property type="entry name" value="SAM-dependent_MTases_sf"/>
</dbReference>
<dbReference type="NCBIfam" id="TIGR00138">
    <property type="entry name" value="rsmG_gidB"/>
    <property type="match status" value="1"/>
</dbReference>
<dbReference type="PANTHER" id="PTHR31760">
    <property type="entry name" value="S-ADENOSYL-L-METHIONINE-DEPENDENT METHYLTRANSFERASES SUPERFAMILY PROTEIN"/>
    <property type="match status" value="1"/>
</dbReference>
<dbReference type="PANTHER" id="PTHR31760:SF0">
    <property type="entry name" value="S-ADENOSYL-L-METHIONINE-DEPENDENT METHYLTRANSFERASES SUPERFAMILY PROTEIN"/>
    <property type="match status" value="1"/>
</dbReference>
<dbReference type="Pfam" id="PF02527">
    <property type="entry name" value="GidB"/>
    <property type="match status" value="1"/>
</dbReference>
<dbReference type="PIRSF" id="PIRSF003078">
    <property type="entry name" value="GidB"/>
    <property type="match status" value="1"/>
</dbReference>
<dbReference type="SUPFAM" id="SSF53335">
    <property type="entry name" value="S-adenosyl-L-methionine-dependent methyltransferases"/>
    <property type="match status" value="1"/>
</dbReference>
<accession>A4QIE3</accession>